<keyword id="KW-0903">Direct protein sequencing</keyword>
<feature type="chain" id="PRO_0000055498" description="Unknown protein NF045 from 2D-PAGE">
    <location>
        <begin position="1"/>
        <end position="20" status="greater than"/>
    </location>
</feature>
<feature type="non-terminal residue">
    <location>
        <position position="20"/>
    </location>
</feature>
<sequence>SHDVNINIQFGFENPQQVVD</sequence>
<name>NF45_NAEFO</name>
<comment type="miscellaneous">
    <text>On the 2D-gel the determined pI of this unknown protein is: 6.0, its MW is: 33.0 kDa.</text>
</comment>
<accession>P83600</accession>
<proteinExistence type="evidence at protein level"/>
<protein>
    <recommendedName>
        <fullName>Unknown protein NF045 from 2D-PAGE</fullName>
    </recommendedName>
</protein>
<organism>
    <name type="scientific">Naegleria fowleri</name>
    <name type="common">Brain eating amoeba</name>
    <dbReference type="NCBI Taxonomy" id="5763"/>
    <lineage>
        <taxon>Eukaryota</taxon>
        <taxon>Discoba</taxon>
        <taxon>Heterolobosea</taxon>
        <taxon>Tetramitia</taxon>
        <taxon>Eutetramitia</taxon>
        <taxon>Vahlkampfiidae</taxon>
        <taxon>Naegleria</taxon>
    </lineage>
</organism>
<reference key="1">
    <citation type="submission" date="2003-05" db="UniProtKB">
        <title>Comparative study of protein profiles on pathogenic and nonpathogenic Naegleria species by 2D-PAGE.</title>
        <authorList>
            <person name="Omura M."/>
            <person name="Furushima-Shimogawara R."/>
            <person name="Izumiyama S."/>
            <person name="Endo T."/>
        </authorList>
    </citation>
    <scope>PROTEIN SEQUENCE</scope>
    <source>
        <strain>ATCC 30214 / Nf 66</strain>
    </source>
</reference>